<comment type="function">
    <text evidence="1">Structure-specific nuclease with 5'-flap endonuclease and 5'-3' exonuclease activities involved in DNA replication and repair. During DNA replication, cleaves the 5'-overhanging flap structure that is generated by displacement synthesis when DNA polymerase encounters the 5'-end of a downstream Okazaki fragment. Binds the unpaired 3'-DNA end and kinks the DNA to facilitate 5' cleavage specificity. Cleaves one nucleotide into the double-stranded DNA from the junction in flap DNA, leaving a nick for ligation. Also involved in the base excision repair (BER) pathway. Acts as a genome stabilization factor that prevents flaps from equilibrating into structures that lead to duplications and deletions. Also possesses 5'-3' exonuclease activity on nicked or gapped double-stranded DNA (By similarity).</text>
</comment>
<comment type="cofactor">
    <cofactor evidence="2">
        <name>Mg(2+)</name>
        <dbReference type="ChEBI" id="CHEBI:18420"/>
    </cofactor>
    <text evidence="2">Binds 2 magnesium ions per subunit. They probably participate in the reaction catalyzed by the enzyme. May bind an additional third magnesium ion after substrate binding.</text>
</comment>
<comment type="subunit">
    <text evidence="2">Interacts with PCNA. PCNA stimulates the nuclease activity without altering cleavage specificity.</text>
</comment>
<comment type="similarity">
    <text evidence="2">Belongs to the XPG/RAD2 endonuclease family. FEN1 subfamily.</text>
</comment>
<evidence type="ECO:0000250" key="1"/>
<evidence type="ECO:0000255" key="2">
    <source>
        <dbReference type="HAMAP-Rule" id="MF_00614"/>
    </source>
</evidence>
<dbReference type="EC" id="3.1.-.-" evidence="2"/>
<dbReference type="EMBL" id="CP000099">
    <property type="protein sequence ID" value="AAZ70179.1"/>
    <property type="molecule type" value="Genomic_DNA"/>
</dbReference>
<dbReference type="SMR" id="Q46D63"/>
<dbReference type="STRING" id="269797.Mbar_A1212"/>
<dbReference type="PaxDb" id="269797-Mbar_A1212"/>
<dbReference type="KEGG" id="mba:Mbar_A1212"/>
<dbReference type="eggNOG" id="arCOG04050">
    <property type="taxonomic scope" value="Archaea"/>
</dbReference>
<dbReference type="HOGENOM" id="CLU_032444_0_0_2"/>
<dbReference type="OrthoDB" id="9593at2157"/>
<dbReference type="GO" id="GO:0008409">
    <property type="term" value="F:5'-3' exonuclease activity"/>
    <property type="evidence" value="ECO:0007669"/>
    <property type="project" value="UniProtKB-UniRule"/>
</dbReference>
<dbReference type="GO" id="GO:0017108">
    <property type="term" value="F:5'-flap endonuclease activity"/>
    <property type="evidence" value="ECO:0007669"/>
    <property type="project" value="UniProtKB-UniRule"/>
</dbReference>
<dbReference type="GO" id="GO:0003677">
    <property type="term" value="F:DNA binding"/>
    <property type="evidence" value="ECO:0007669"/>
    <property type="project" value="UniProtKB-UniRule"/>
</dbReference>
<dbReference type="GO" id="GO:0000287">
    <property type="term" value="F:magnesium ion binding"/>
    <property type="evidence" value="ECO:0007669"/>
    <property type="project" value="UniProtKB-UniRule"/>
</dbReference>
<dbReference type="GO" id="GO:0006281">
    <property type="term" value="P:DNA repair"/>
    <property type="evidence" value="ECO:0007669"/>
    <property type="project" value="UniProtKB-UniRule"/>
</dbReference>
<dbReference type="GO" id="GO:0043137">
    <property type="term" value="P:DNA replication, removal of RNA primer"/>
    <property type="evidence" value="ECO:0007669"/>
    <property type="project" value="UniProtKB-UniRule"/>
</dbReference>
<dbReference type="CDD" id="cd09903">
    <property type="entry name" value="H3TH_FEN1-Arc"/>
    <property type="match status" value="1"/>
</dbReference>
<dbReference type="CDD" id="cd09867">
    <property type="entry name" value="PIN_FEN1"/>
    <property type="match status" value="1"/>
</dbReference>
<dbReference type="FunFam" id="3.40.50.1010:FF:000016">
    <property type="entry name" value="Flap endonuclease 1"/>
    <property type="match status" value="1"/>
</dbReference>
<dbReference type="Gene3D" id="1.10.150.20">
    <property type="entry name" value="5' to 3' exonuclease, C-terminal subdomain"/>
    <property type="match status" value="1"/>
</dbReference>
<dbReference type="Gene3D" id="3.40.50.1010">
    <property type="entry name" value="5'-nuclease"/>
    <property type="match status" value="1"/>
</dbReference>
<dbReference type="HAMAP" id="MF_00614">
    <property type="entry name" value="Fen"/>
    <property type="match status" value="1"/>
</dbReference>
<dbReference type="InterPro" id="IPR036279">
    <property type="entry name" value="5-3_exonuclease_C_sf"/>
</dbReference>
<dbReference type="InterPro" id="IPR023426">
    <property type="entry name" value="Flap_endonuc"/>
</dbReference>
<dbReference type="InterPro" id="IPR019973">
    <property type="entry name" value="Flap_endonuc_arc"/>
</dbReference>
<dbReference type="InterPro" id="IPR008918">
    <property type="entry name" value="HhH2"/>
</dbReference>
<dbReference type="InterPro" id="IPR029060">
    <property type="entry name" value="PIN-like_dom_sf"/>
</dbReference>
<dbReference type="InterPro" id="IPR006086">
    <property type="entry name" value="XPG-I_dom"/>
</dbReference>
<dbReference type="InterPro" id="IPR006084">
    <property type="entry name" value="XPG/Rad2"/>
</dbReference>
<dbReference type="InterPro" id="IPR019974">
    <property type="entry name" value="XPG_CS"/>
</dbReference>
<dbReference type="InterPro" id="IPR006085">
    <property type="entry name" value="XPG_DNA_repair_N"/>
</dbReference>
<dbReference type="NCBIfam" id="TIGR03674">
    <property type="entry name" value="fen_arch"/>
    <property type="match status" value="1"/>
</dbReference>
<dbReference type="PANTHER" id="PTHR11081:SF9">
    <property type="entry name" value="FLAP ENDONUCLEASE 1"/>
    <property type="match status" value="1"/>
</dbReference>
<dbReference type="PANTHER" id="PTHR11081">
    <property type="entry name" value="FLAP ENDONUCLEASE FAMILY MEMBER"/>
    <property type="match status" value="1"/>
</dbReference>
<dbReference type="Pfam" id="PF00867">
    <property type="entry name" value="XPG_I"/>
    <property type="match status" value="1"/>
</dbReference>
<dbReference type="Pfam" id="PF00752">
    <property type="entry name" value="XPG_N"/>
    <property type="match status" value="1"/>
</dbReference>
<dbReference type="PRINTS" id="PR00853">
    <property type="entry name" value="XPGRADSUPER"/>
</dbReference>
<dbReference type="SMART" id="SM00279">
    <property type="entry name" value="HhH2"/>
    <property type="match status" value="1"/>
</dbReference>
<dbReference type="SMART" id="SM00484">
    <property type="entry name" value="XPGI"/>
    <property type="match status" value="1"/>
</dbReference>
<dbReference type="SMART" id="SM00485">
    <property type="entry name" value="XPGN"/>
    <property type="match status" value="1"/>
</dbReference>
<dbReference type="SUPFAM" id="SSF47807">
    <property type="entry name" value="5' to 3' exonuclease, C-terminal subdomain"/>
    <property type="match status" value="1"/>
</dbReference>
<dbReference type="SUPFAM" id="SSF88723">
    <property type="entry name" value="PIN domain-like"/>
    <property type="match status" value="1"/>
</dbReference>
<dbReference type="PROSITE" id="PS00841">
    <property type="entry name" value="XPG_1"/>
    <property type="match status" value="1"/>
</dbReference>
<gene>
    <name evidence="2" type="primary">fen</name>
    <name type="ordered locus">Mbar_A1212</name>
</gene>
<protein>
    <recommendedName>
        <fullName evidence="2">Flap endonuclease 1</fullName>
        <shortName evidence="2">FEN-1</shortName>
        <ecNumber evidence="2">3.1.-.-</ecNumber>
    </recommendedName>
    <alternativeName>
        <fullName evidence="2">Flap structure-specific endonuclease 1</fullName>
    </alternativeName>
</protein>
<feature type="chain" id="PRO_1000061322" description="Flap endonuclease 1">
    <location>
        <begin position="1"/>
        <end position="338"/>
    </location>
</feature>
<feature type="region of interest" description="N-domain">
    <location>
        <begin position="1"/>
        <end position="98"/>
    </location>
</feature>
<feature type="region of interest" description="I-domain">
    <location>
        <begin position="116"/>
        <end position="257"/>
    </location>
</feature>
<feature type="region of interest" description="Interaction with PCNA" evidence="2">
    <location>
        <begin position="330"/>
        <end position="338"/>
    </location>
</feature>
<feature type="binding site" evidence="2">
    <location>
        <position position="27"/>
    </location>
    <ligand>
        <name>Mg(2+)</name>
        <dbReference type="ChEBI" id="CHEBI:18420"/>
        <label>1</label>
    </ligand>
</feature>
<feature type="binding site" evidence="2">
    <location>
        <position position="80"/>
    </location>
    <ligand>
        <name>Mg(2+)</name>
        <dbReference type="ChEBI" id="CHEBI:18420"/>
        <label>1</label>
    </ligand>
</feature>
<feature type="binding site" evidence="2">
    <location>
        <position position="152"/>
    </location>
    <ligand>
        <name>Mg(2+)</name>
        <dbReference type="ChEBI" id="CHEBI:18420"/>
        <label>1</label>
    </ligand>
</feature>
<feature type="binding site" evidence="2">
    <location>
        <position position="154"/>
    </location>
    <ligand>
        <name>Mg(2+)</name>
        <dbReference type="ChEBI" id="CHEBI:18420"/>
        <label>1</label>
    </ligand>
</feature>
<feature type="binding site" evidence="2">
    <location>
        <position position="173"/>
    </location>
    <ligand>
        <name>Mg(2+)</name>
        <dbReference type="ChEBI" id="CHEBI:18420"/>
        <label>2</label>
    </ligand>
</feature>
<feature type="binding site" evidence="2">
    <location>
        <position position="175"/>
    </location>
    <ligand>
        <name>Mg(2+)</name>
        <dbReference type="ChEBI" id="CHEBI:18420"/>
        <label>2</label>
    </ligand>
</feature>
<feature type="binding site" evidence="2">
    <location>
        <position position="236"/>
    </location>
    <ligand>
        <name>Mg(2+)</name>
        <dbReference type="ChEBI" id="CHEBI:18420"/>
        <label>2</label>
    </ligand>
</feature>
<sequence>MGTDIGDLLQKRKIELSDLTNQVVAIDAFNTLHQFLSIIRQRDGNPLVNSRGKVTSHLSGLLYRTASLIEVGIKPVFIFDGKPPDLKSETLNRRKEVRESSLEKWENAKVEGDLEAAYKYAQASSKVDQEIVEDSKYLLSIMGIPWIQAPCEGEAQAAHMVLKKDADYVASQDYDSFLFGAPTVIRNLAVTGKRKLPGKHVYVDVELELIELEETLGVLGINREQLIDIAICVGTDFNKGLEKVGPKTALKLIKKHGDIHAVLREKGVEIKELDRIRELFTHPDVTDDYEIKWGKPDSEKLIKFLCKENDFSVDRVKKAVERLKVVSRGRQQTLDQWF</sequence>
<keyword id="KW-0227">DNA damage</keyword>
<keyword id="KW-0234">DNA repair</keyword>
<keyword id="KW-0235">DNA replication</keyword>
<keyword id="KW-0255">Endonuclease</keyword>
<keyword id="KW-0269">Exonuclease</keyword>
<keyword id="KW-0378">Hydrolase</keyword>
<keyword id="KW-0460">Magnesium</keyword>
<keyword id="KW-0479">Metal-binding</keyword>
<keyword id="KW-0540">Nuclease</keyword>
<accession>Q46D63</accession>
<reference key="1">
    <citation type="journal article" date="2006" name="J. Bacteriol.">
        <title>The Methanosarcina barkeri genome: comparative analysis with Methanosarcina acetivorans and Methanosarcina mazei reveals extensive rearrangement within methanosarcinal genomes.</title>
        <authorList>
            <person name="Maeder D.L."/>
            <person name="Anderson I."/>
            <person name="Brettin T.S."/>
            <person name="Bruce D.C."/>
            <person name="Gilna P."/>
            <person name="Han C.S."/>
            <person name="Lapidus A."/>
            <person name="Metcalf W.W."/>
            <person name="Saunders E."/>
            <person name="Tapia R."/>
            <person name="Sowers K.R."/>
        </authorList>
    </citation>
    <scope>NUCLEOTIDE SEQUENCE [LARGE SCALE GENOMIC DNA]</scope>
    <source>
        <strain>Fusaro / DSM 804</strain>
    </source>
</reference>
<proteinExistence type="inferred from homology"/>
<organism>
    <name type="scientific">Methanosarcina barkeri (strain Fusaro / DSM 804)</name>
    <dbReference type="NCBI Taxonomy" id="269797"/>
    <lineage>
        <taxon>Archaea</taxon>
        <taxon>Methanobacteriati</taxon>
        <taxon>Methanobacteriota</taxon>
        <taxon>Stenosarchaea group</taxon>
        <taxon>Methanomicrobia</taxon>
        <taxon>Methanosarcinales</taxon>
        <taxon>Methanosarcinaceae</taxon>
        <taxon>Methanosarcina</taxon>
    </lineage>
</organism>
<name>FEN_METBF</name>